<dbReference type="EMBL" id="AE001273">
    <property type="protein sequence ID" value="AAC68116.1"/>
    <property type="molecule type" value="Genomic_DNA"/>
</dbReference>
<dbReference type="PIR" id="G42645">
    <property type="entry name" value="G42645"/>
</dbReference>
<dbReference type="RefSeq" id="NP_220030.1">
    <property type="nucleotide sequence ID" value="NC_000117.1"/>
</dbReference>
<dbReference type="RefSeq" id="WP_009871879.1">
    <property type="nucleotide sequence ID" value="NC_000117.1"/>
</dbReference>
<dbReference type="SMR" id="P0CE07"/>
<dbReference type="FunCoup" id="P0CE07">
    <property type="interactions" value="239"/>
</dbReference>
<dbReference type="STRING" id="272561.CT_515"/>
<dbReference type="EnsemblBacteria" id="AAC68116">
    <property type="protein sequence ID" value="AAC68116"/>
    <property type="gene ID" value="CT_515"/>
</dbReference>
<dbReference type="GeneID" id="884291"/>
<dbReference type="KEGG" id="ctr:CT_515"/>
<dbReference type="PATRIC" id="fig|272561.5.peg.559"/>
<dbReference type="HOGENOM" id="CLU_098428_0_2_0"/>
<dbReference type="InParanoid" id="P0CE07"/>
<dbReference type="OrthoDB" id="9802617at2"/>
<dbReference type="Proteomes" id="UP000000431">
    <property type="component" value="Chromosome"/>
</dbReference>
<dbReference type="GO" id="GO:0022627">
    <property type="term" value="C:cytosolic small ribosomal subunit"/>
    <property type="evidence" value="ECO:0000318"/>
    <property type="project" value="GO_Central"/>
</dbReference>
<dbReference type="GO" id="GO:0019843">
    <property type="term" value="F:rRNA binding"/>
    <property type="evidence" value="ECO:0007669"/>
    <property type="project" value="UniProtKB-UniRule"/>
</dbReference>
<dbReference type="GO" id="GO:0003735">
    <property type="term" value="F:structural constituent of ribosome"/>
    <property type="evidence" value="ECO:0000318"/>
    <property type="project" value="GO_Central"/>
</dbReference>
<dbReference type="GO" id="GO:0006412">
    <property type="term" value="P:translation"/>
    <property type="evidence" value="ECO:0007669"/>
    <property type="project" value="UniProtKB-UniRule"/>
</dbReference>
<dbReference type="FunFam" id="3.30.1370.30:FF:000002">
    <property type="entry name" value="30S ribosomal protein S8"/>
    <property type="match status" value="1"/>
</dbReference>
<dbReference type="FunFam" id="3.30.1490.10:FF:000001">
    <property type="entry name" value="30S ribosomal protein S8"/>
    <property type="match status" value="1"/>
</dbReference>
<dbReference type="Gene3D" id="3.30.1370.30">
    <property type="match status" value="1"/>
</dbReference>
<dbReference type="Gene3D" id="3.30.1490.10">
    <property type="match status" value="1"/>
</dbReference>
<dbReference type="HAMAP" id="MF_01302_B">
    <property type="entry name" value="Ribosomal_uS8_B"/>
    <property type="match status" value="1"/>
</dbReference>
<dbReference type="InterPro" id="IPR000630">
    <property type="entry name" value="Ribosomal_uS8"/>
</dbReference>
<dbReference type="InterPro" id="IPR047863">
    <property type="entry name" value="Ribosomal_uS8_CS"/>
</dbReference>
<dbReference type="InterPro" id="IPR035987">
    <property type="entry name" value="Ribosomal_uS8_sf"/>
</dbReference>
<dbReference type="NCBIfam" id="NF001109">
    <property type="entry name" value="PRK00136.1"/>
    <property type="match status" value="1"/>
</dbReference>
<dbReference type="PANTHER" id="PTHR11758">
    <property type="entry name" value="40S RIBOSOMAL PROTEIN S15A"/>
    <property type="match status" value="1"/>
</dbReference>
<dbReference type="Pfam" id="PF00410">
    <property type="entry name" value="Ribosomal_S8"/>
    <property type="match status" value="1"/>
</dbReference>
<dbReference type="SUPFAM" id="SSF56047">
    <property type="entry name" value="Ribosomal protein S8"/>
    <property type="match status" value="1"/>
</dbReference>
<dbReference type="PROSITE" id="PS00053">
    <property type="entry name" value="RIBOSOMAL_S8"/>
    <property type="match status" value="1"/>
</dbReference>
<protein>
    <recommendedName>
        <fullName evidence="1">Small ribosomal subunit protein uS8</fullName>
    </recommendedName>
    <alternativeName>
        <fullName evidence="2">30S ribosomal protein S8</fullName>
    </alternativeName>
</protein>
<reference key="1">
    <citation type="journal article" date="1998" name="Science">
        <title>Genome sequence of an obligate intracellular pathogen of humans: Chlamydia trachomatis.</title>
        <authorList>
            <person name="Stephens R.S."/>
            <person name="Kalman S."/>
            <person name="Lammel C.J."/>
            <person name="Fan J."/>
            <person name="Marathe R."/>
            <person name="Aravind L."/>
            <person name="Mitchell W.P."/>
            <person name="Olinger L."/>
            <person name="Tatusov R.L."/>
            <person name="Zhao Q."/>
            <person name="Koonin E.V."/>
            <person name="Davis R.W."/>
        </authorList>
    </citation>
    <scope>NUCLEOTIDE SEQUENCE [LARGE SCALE GENOMIC DNA]</scope>
    <source>
        <strain>ATCC VR-885 / DSM 19411 / UW-3/Cx</strain>
    </source>
</reference>
<accession>P0CE07</accession>
<accession>O84521</accession>
<accession>P28544</accession>
<accession>Q9ZG61</accession>
<sequence>MGMTSDSIANLLTRIRNALMAEHLYVDIEHSKMLEAIVRILKQHGFVAHFLVKEENRKRLMRVFLRYGEDRRPVIHALKRVSKPSRRVYVSAAKIPYVFGNMGIAVLSTPQGVLEGSVARAKNVGGELLCLVW</sequence>
<proteinExistence type="inferred from homology"/>
<name>RS8_CHLTR</name>
<organism>
    <name type="scientific">Chlamydia trachomatis serovar D (strain ATCC VR-885 / DSM 19411 / UW-3/Cx)</name>
    <dbReference type="NCBI Taxonomy" id="272561"/>
    <lineage>
        <taxon>Bacteria</taxon>
        <taxon>Pseudomonadati</taxon>
        <taxon>Chlamydiota</taxon>
        <taxon>Chlamydiia</taxon>
        <taxon>Chlamydiales</taxon>
        <taxon>Chlamydiaceae</taxon>
        <taxon>Chlamydia/Chlamydophila group</taxon>
        <taxon>Chlamydia</taxon>
    </lineage>
</organism>
<evidence type="ECO:0000255" key="1">
    <source>
        <dbReference type="HAMAP-Rule" id="MF_01302"/>
    </source>
</evidence>
<evidence type="ECO:0000305" key="2"/>
<feature type="chain" id="PRO_0000126394" description="Small ribosomal subunit protein uS8">
    <location>
        <begin position="1"/>
        <end position="133"/>
    </location>
</feature>
<keyword id="KW-1185">Reference proteome</keyword>
<keyword id="KW-0687">Ribonucleoprotein</keyword>
<keyword id="KW-0689">Ribosomal protein</keyword>
<keyword id="KW-0694">RNA-binding</keyword>
<keyword id="KW-0699">rRNA-binding</keyword>
<comment type="function">
    <text evidence="1">One of the primary rRNA binding proteins, it binds directly to 16S rRNA central domain where it helps coordinate assembly of the platform of the 30S subunit.</text>
</comment>
<comment type="subunit">
    <text evidence="1">Part of the 30S ribosomal subunit. Contacts proteins S5 and S12.</text>
</comment>
<comment type="similarity">
    <text evidence="1">Belongs to the universal ribosomal protein uS8 family.</text>
</comment>
<gene>
    <name evidence="1" type="primary">rpsH</name>
    <name type="synonym">rs8</name>
    <name type="ordered locus">CT_515</name>
</gene>